<keyword id="KW-0997">Cell inner membrane</keyword>
<keyword id="KW-1003">Cell membrane</keyword>
<keyword id="KW-0472">Membrane</keyword>
<keyword id="KW-0520">NAD</keyword>
<keyword id="KW-0874">Quinone</keyword>
<keyword id="KW-1278">Translocase</keyword>
<keyword id="KW-0813">Transport</keyword>
<keyword id="KW-0830">Ubiquinone</keyword>
<protein>
    <recommendedName>
        <fullName evidence="1">NADH-quinone oxidoreductase subunit D</fullName>
        <ecNumber evidence="1">7.1.1.-</ecNumber>
    </recommendedName>
    <alternativeName>
        <fullName evidence="1">NADH dehydrogenase I subunit D</fullName>
    </alternativeName>
    <alternativeName>
        <fullName evidence="1">NDH-1 subunit D</fullName>
    </alternativeName>
</protein>
<organism>
    <name type="scientific">Bartonella bacilliformis (strain ATCC 35685 / KC583 / Herrer 020/F12,63)</name>
    <dbReference type="NCBI Taxonomy" id="360095"/>
    <lineage>
        <taxon>Bacteria</taxon>
        <taxon>Pseudomonadati</taxon>
        <taxon>Pseudomonadota</taxon>
        <taxon>Alphaproteobacteria</taxon>
        <taxon>Hyphomicrobiales</taxon>
        <taxon>Bartonellaceae</taxon>
        <taxon>Bartonella</taxon>
    </lineage>
</organism>
<feature type="chain" id="PRO_0000357771" description="NADH-quinone oxidoreductase subunit D">
    <location>
        <begin position="1"/>
        <end position="396"/>
    </location>
</feature>
<dbReference type="EC" id="7.1.1.-" evidence="1"/>
<dbReference type="EMBL" id="CP000524">
    <property type="protein sequence ID" value="ABM44692.1"/>
    <property type="molecule type" value="Genomic_DNA"/>
</dbReference>
<dbReference type="RefSeq" id="WP_005767066.1">
    <property type="nucleotide sequence ID" value="NC_008783.1"/>
</dbReference>
<dbReference type="SMR" id="A1USX0"/>
<dbReference type="STRING" id="360095.BARBAKC583_0781"/>
<dbReference type="GeneID" id="4684043"/>
<dbReference type="KEGG" id="bbk:BARBAKC583_0781"/>
<dbReference type="PATRIC" id="fig|360095.6.peg.754"/>
<dbReference type="eggNOG" id="COG0649">
    <property type="taxonomic scope" value="Bacteria"/>
</dbReference>
<dbReference type="HOGENOM" id="CLU_015134_1_1_5"/>
<dbReference type="OrthoDB" id="9801496at2"/>
<dbReference type="Proteomes" id="UP000000643">
    <property type="component" value="Chromosome"/>
</dbReference>
<dbReference type="GO" id="GO:0005886">
    <property type="term" value="C:plasma membrane"/>
    <property type="evidence" value="ECO:0007669"/>
    <property type="project" value="UniProtKB-SubCell"/>
</dbReference>
<dbReference type="GO" id="GO:0051287">
    <property type="term" value="F:NAD binding"/>
    <property type="evidence" value="ECO:0007669"/>
    <property type="project" value="InterPro"/>
</dbReference>
<dbReference type="GO" id="GO:0050136">
    <property type="term" value="F:NADH:ubiquinone reductase (non-electrogenic) activity"/>
    <property type="evidence" value="ECO:0007669"/>
    <property type="project" value="UniProtKB-UniRule"/>
</dbReference>
<dbReference type="GO" id="GO:0048038">
    <property type="term" value="F:quinone binding"/>
    <property type="evidence" value="ECO:0007669"/>
    <property type="project" value="UniProtKB-KW"/>
</dbReference>
<dbReference type="FunFam" id="1.10.645.10:FF:000005">
    <property type="entry name" value="NADH-quinone oxidoreductase subunit D"/>
    <property type="match status" value="1"/>
</dbReference>
<dbReference type="Gene3D" id="1.10.645.10">
    <property type="entry name" value="Cytochrome-c3 Hydrogenase, chain B"/>
    <property type="match status" value="1"/>
</dbReference>
<dbReference type="HAMAP" id="MF_01358">
    <property type="entry name" value="NDH1_NuoD"/>
    <property type="match status" value="1"/>
</dbReference>
<dbReference type="InterPro" id="IPR001135">
    <property type="entry name" value="NADH_Q_OxRdtase_suD"/>
</dbReference>
<dbReference type="InterPro" id="IPR014029">
    <property type="entry name" value="NADH_UbQ_OxRdtase_49kDa_CS"/>
</dbReference>
<dbReference type="InterPro" id="IPR022885">
    <property type="entry name" value="NDH1_su_D/H"/>
</dbReference>
<dbReference type="InterPro" id="IPR029014">
    <property type="entry name" value="NiFe-Hase_large"/>
</dbReference>
<dbReference type="NCBIfam" id="TIGR01962">
    <property type="entry name" value="NuoD"/>
    <property type="match status" value="1"/>
</dbReference>
<dbReference type="NCBIfam" id="NF004739">
    <property type="entry name" value="PRK06075.1"/>
    <property type="match status" value="1"/>
</dbReference>
<dbReference type="PANTHER" id="PTHR11993:SF10">
    <property type="entry name" value="NADH DEHYDROGENASE [UBIQUINONE] IRON-SULFUR PROTEIN 2, MITOCHONDRIAL"/>
    <property type="match status" value="1"/>
</dbReference>
<dbReference type="PANTHER" id="PTHR11993">
    <property type="entry name" value="NADH-UBIQUINONE OXIDOREDUCTASE 49 KDA SUBUNIT"/>
    <property type="match status" value="1"/>
</dbReference>
<dbReference type="Pfam" id="PF00346">
    <property type="entry name" value="Complex1_49kDa"/>
    <property type="match status" value="1"/>
</dbReference>
<dbReference type="SUPFAM" id="SSF56762">
    <property type="entry name" value="HydB/Nqo4-like"/>
    <property type="match status" value="1"/>
</dbReference>
<dbReference type="PROSITE" id="PS00535">
    <property type="entry name" value="COMPLEX1_49K"/>
    <property type="match status" value="1"/>
</dbReference>
<reference key="1">
    <citation type="submission" date="2006-12" db="EMBL/GenBank/DDBJ databases">
        <authorList>
            <person name="Hendrix L."/>
            <person name="Mohamoud Y."/>
            <person name="Radune D."/>
            <person name="Shvartsbeyn A."/>
            <person name="Daugherty S."/>
            <person name="Dodson R."/>
            <person name="Durkin A.S."/>
            <person name="Harkins D."/>
            <person name="Huot H."/>
            <person name="Kothari S.P."/>
            <person name="Madupu R."/>
            <person name="Li J."/>
            <person name="Nelson W.C."/>
            <person name="Shrivastava S."/>
            <person name="Giglio M.G."/>
            <person name="Haft D."/>
            <person name="Selengut J."/>
            <person name="Fraser-Ligget C."/>
            <person name="Seshadri R."/>
        </authorList>
    </citation>
    <scope>NUCLEOTIDE SEQUENCE [LARGE SCALE GENOMIC DNA]</scope>
    <source>
        <strain>ATCC 35685 / KC583 / Herrer 020/F12,63</strain>
    </source>
</reference>
<name>NUOD_BARBK</name>
<evidence type="ECO:0000255" key="1">
    <source>
        <dbReference type="HAMAP-Rule" id="MF_01358"/>
    </source>
</evidence>
<comment type="function">
    <text evidence="1">NDH-1 shuttles electrons from NADH, via FMN and iron-sulfur (Fe-S) centers, to quinones in the respiratory chain. The immediate electron acceptor for the enzyme in this species is believed to be ubiquinone. Couples the redox reaction to proton translocation (for every two electrons transferred, four hydrogen ions are translocated across the cytoplasmic membrane), and thus conserves the redox energy in a proton gradient.</text>
</comment>
<comment type="catalytic activity">
    <reaction evidence="1">
        <text>a quinone + NADH + 5 H(+)(in) = a quinol + NAD(+) + 4 H(+)(out)</text>
        <dbReference type="Rhea" id="RHEA:57888"/>
        <dbReference type="ChEBI" id="CHEBI:15378"/>
        <dbReference type="ChEBI" id="CHEBI:24646"/>
        <dbReference type="ChEBI" id="CHEBI:57540"/>
        <dbReference type="ChEBI" id="CHEBI:57945"/>
        <dbReference type="ChEBI" id="CHEBI:132124"/>
    </reaction>
</comment>
<comment type="subunit">
    <text evidence="1">NDH-1 is composed of 14 different subunits. Subunits NuoB, C, D, E, F, and G constitute the peripheral sector of the complex.</text>
</comment>
<comment type="subcellular location">
    <subcellularLocation>
        <location evidence="1">Cell inner membrane</location>
        <topology evidence="1">Peripheral membrane protein</topology>
        <orientation evidence="1">Cytoplasmic side</orientation>
    </subcellularLocation>
</comment>
<comment type="similarity">
    <text evidence="1">Belongs to the complex I 49 kDa subunit family.</text>
</comment>
<proteinExistence type="inferred from homology"/>
<accession>A1USX0</accession>
<sequence>MAEVNVRNFNINFGPQHPAAHGVLRMVLELDGEVVERVDPHIGLLHRGTEKLMETKTYLQAGPYLDRLDYVAPMNQEHAFVLAVEKLLGVEVPKRGQLIRVLFSEIGRLLNHLLNVTTQAMDVGALTPPLWGFEQREKLMIFYERACGARLHANYFRPGGVHQDLPEVLIEDIGNFIDPFLVALGNLDALITPNRIFKQRNVDIGVVSIDEAWARGFSGVMIRGAGVPWDLRKSQPYECYDEMEFDIPVGKNSDCYDRYLIRMEEMRQSAKIMRQCVDRLLSTEKDGPVSSLDRKIVPPKRSEMKNSMEALIHHFKLYTEGFHTPPGEVYVAVEAPKGEFGVYLVSDGTNKPYRVKLRAPGFAHLQAMDFLTRGHMLADATAILGSIDIVFGEVDR</sequence>
<gene>
    <name evidence="1" type="primary">nuoD</name>
    <name type="ordered locus">BARBAKC583_0781</name>
</gene>